<comment type="function">
    <text evidence="1">Involved in the regulation of the intracellular balance of NAD and NADP, and is a key enzyme in the biosynthesis of NADP. Catalyzes specifically the phosphorylation on 2'-hydroxyl of the adenosine moiety of NAD to yield NADP.</text>
</comment>
<comment type="catalytic activity">
    <reaction evidence="1">
        <text>NAD(+) + ATP = ADP + NADP(+) + H(+)</text>
        <dbReference type="Rhea" id="RHEA:18629"/>
        <dbReference type="ChEBI" id="CHEBI:15378"/>
        <dbReference type="ChEBI" id="CHEBI:30616"/>
        <dbReference type="ChEBI" id="CHEBI:57540"/>
        <dbReference type="ChEBI" id="CHEBI:58349"/>
        <dbReference type="ChEBI" id="CHEBI:456216"/>
        <dbReference type="EC" id="2.7.1.23"/>
    </reaction>
</comment>
<comment type="cofactor">
    <cofactor evidence="1">
        <name>a divalent metal cation</name>
        <dbReference type="ChEBI" id="CHEBI:60240"/>
    </cofactor>
</comment>
<comment type="subcellular location">
    <subcellularLocation>
        <location evidence="1">Cytoplasm</location>
    </subcellularLocation>
</comment>
<comment type="similarity">
    <text evidence="1">Belongs to the NAD kinase family.</text>
</comment>
<sequence length="259" mass="28852">MEMMMTAAPRIAFLASTAEPAQRARQELMARYGDCSIEEADVLCALGGDGFMLRTLHRYGASGKPVYGMKLGSVGFLMNQYHDDLLERLQRAEPAKLRPLQMMAQTESGVSVESLAYNEVSLLRQTHQAAYISIDLNGQTRIDELTGDGVIVATPAGSTAYNYSAHGPILPLGSHTLALTPIAPYRPRRWRGAILKADTEIRFRVLDPYKRPVSVTADSHEIRDVVEVTIRESTEQRVTLLFDPEHNLEERIFSEQFAV</sequence>
<gene>
    <name evidence="1" type="primary">nadK</name>
    <name type="ordered locus">XF_2090</name>
</gene>
<organism>
    <name type="scientific">Xylella fastidiosa (strain 9a5c)</name>
    <dbReference type="NCBI Taxonomy" id="160492"/>
    <lineage>
        <taxon>Bacteria</taxon>
        <taxon>Pseudomonadati</taxon>
        <taxon>Pseudomonadota</taxon>
        <taxon>Gammaproteobacteria</taxon>
        <taxon>Lysobacterales</taxon>
        <taxon>Lysobacteraceae</taxon>
        <taxon>Xylella</taxon>
    </lineage>
</organism>
<protein>
    <recommendedName>
        <fullName evidence="1">NAD kinase</fullName>
        <ecNumber evidence="1">2.7.1.23</ecNumber>
    </recommendedName>
    <alternativeName>
        <fullName evidence="1">ATP-dependent NAD kinase</fullName>
    </alternativeName>
</protein>
<proteinExistence type="inferred from homology"/>
<dbReference type="EC" id="2.7.1.23" evidence="1"/>
<dbReference type="EMBL" id="AE003849">
    <property type="protein sequence ID" value="AAF84889.1"/>
    <property type="molecule type" value="Genomic_DNA"/>
</dbReference>
<dbReference type="PIR" id="G82601">
    <property type="entry name" value="G82601"/>
</dbReference>
<dbReference type="SMR" id="Q9PBQ0"/>
<dbReference type="STRING" id="160492.XF_2090"/>
<dbReference type="KEGG" id="xfa:XF_2090"/>
<dbReference type="eggNOG" id="COG0061">
    <property type="taxonomic scope" value="Bacteria"/>
</dbReference>
<dbReference type="HOGENOM" id="CLU_073319_0_0_6"/>
<dbReference type="Proteomes" id="UP000000812">
    <property type="component" value="Chromosome"/>
</dbReference>
<dbReference type="GO" id="GO:0005737">
    <property type="term" value="C:cytoplasm"/>
    <property type="evidence" value="ECO:0007669"/>
    <property type="project" value="UniProtKB-SubCell"/>
</dbReference>
<dbReference type="GO" id="GO:0005524">
    <property type="term" value="F:ATP binding"/>
    <property type="evidence" value="ECO:0007669"/>
    <property type="project" value="UniProtKB-KW"/>
</dbReference>
<dbReference type="GO" id="GO:0046872">
    <property type="term" value="F:metal ion binding"/>
    <property type="evidence" value="ECO:0007669"/>
    <property type="project" value="UniProtKB-UniRule"/>
</dbReference>
<dbReference type="GO" id="GO:0051287">
    <property type="term" value="F:NAD binding"/>
    <property type="evidence" value="ECO:0007669"/>
    <property type="project" value="UniProtKB-ARBA"/>
</dbReference>
<dbReference type="GO" id="GO:0003951">
    <property type="term" value="F:NAD+ kinase activity"/>
    <property type="evidence" value="ECO:0007669"/>
    <property type="project" value="UniProtKB-UniRule"/>
</dbReference>
<dbReference type="GO" id="GO:0019674">
    <property type="term" value="P:NAD metabolic process"/>
    <property type="evidence" value="ECO:0007669"/>
    <property type="project" value="InterPro"/>
</dbReference>
<dbReference type="GO" id="GO:0006741">
    <property type="term" value="P:NADP biosynthetic process"/>
    <property type="evidence" value="ECO:0007669"/>
    <property type="project" value="UniProtKB-UniRule"/>
</dbReference>
<dbReference type="FunFam" id="2.60.200.30:FF:000012">
    <property type="entry name" value="NAD kinase"/>
    <property type="match status" value="1"/>
</dbReference>
<dbReference type="Gene3D" id="3.40.50.10330">
    <property type="entry name" value="Probable inorganic polyphosphate/atp-NAD kinase, domain 1"/>
    <property type="match status" value="1"/>
</dbReference>
<dbReference type="Gene3D" id="2.60.200.30">
    <property type="entry name" value="Probable inorganic polyphosphate/atp-NAD kinase, domain 2"/>
    <property type="match status" value="1"/>
</dbReference>
<dbReference type="HAMAP" id="MF_00361">
    <property type="entry name" value="NAD_kinase"/>
    <property type="match status" value="1"/>
</dbReference>
<dbReference type="InterPro" id="IPR017438">
    <property type="entry name" value="ATP-NAD_kinase_N"/>
</dbReference>
<dbReference type="InterPro" id="IPR017437">
    <property type="entry name" value="ATP-NAD_kinase_PpnK-typ_C"/>
</dbReference>
<dbReference type="InterPro" id="IPR016064">
    <property type="entry name" value="NAD/diacylglycerol_kinase_sf"/>
</dbReference>
<dbReference type="InterPro" id="IPR002504">
    <property type="entry name" value="NADK"/>
</dbReference>
<dbReference type="NCBIfam" id="NF003406">
    <property type="entry name" value="PRK04761.1"/>
    <property type="match status" value="1"/>
</dbReference>
<dbReference type="PANTHER" id="PTHR20275">
    <property type="entry name" value="NAD KINASE"/>
    <property type="match status" value="1"/>
</dbReference>
<dbReference type="PANTHER" id="PTHR20275:SF0">
    <property type="entry name" value="NAD KINASE"/>
    <property type="match status" value="1"/>
</dbReference>
<dbReference type="Pfam" id="PF20143">
    <property type="entry name" value="NAD_kinase_C"/>
    <property type="match status" value="1"/>
</dbReference>
<dbReference type="SUPFAM" id="SSF111331">
    <property type="entry name" value="NAD kinase/diacylglycerol kinase-like"/>
    <property type="match status" value="1"/>
</dbReference>
<accession>Q9PBQ0</accession>
<keyword id="KW-0067">ATP-binding</keyword>
<keyword id="KW-0963">Cytoplasm</keyword>
<keyword id="KW-0418">Kinase</keyword>
<keyword id="KW-0520">NAD</keyword>
<keyword id="KW-0521">NADP</keyword>
<keyword id="KW-0547">Nucleotide-binding</keyword>
<keyword id="KW-0808">Transferase</keyword>
<feature type="chain" id="PRO_0000120693" description="NAD kinase">
    <location>
        <begin position="1"/>
        <end position="259"/>
    </location>
</feature>
<feature type="active site" description="Proton acceptor" evidence="1">
    <location>
        <position position="49"/>
    </location>
</feature>
<feature type="binding site" evidence="1">
    <location>
        <begin position="49"/>
        <end position="50"/>
    </location>
    <ligand>
        <name>NAD(+)</name>
        <dbReference type="ChEBI" id="CHEBI:57540"/>
    </ligand>
</feature>
<feature type="binding site" evidence="1">
    <location>
        <position position="54"/>
    </location>
    <ligand>
        <name>NAD(+)</name>
        <dbReference type="ChEBI" id="CHEBI:57540"/>
    </ligand>
</feature>
<feature type="binding site" evidence="1">
    <location>
        <begin position="118"/>
        <end position="119"/>
    </location>
    <ligand>
        <name>NAD(+)</name>
        <dbReference type="ChEBI" id="CHEBI:57540"/>
    </ligand>
</feature>
<feature type="binding site" evidence="1">
    <location>
        <position position="148"/>
    </location>
    <ligand>
        <name>NAD(+)</name>
        <dbReference type="ChEBI" id="CHEBI:57540"/>
    </ligand>
</feature>
<feature type="binding site" evidence="1">
    <location>
        <position position="156"/>
    </location>
    <ligand>
        <name>NAD(+)</name>
        <dbReference type="ChEBI" id="CHEBI:57540"/>
    </ligand>
</feature>
<feature type="binding site" evidence="1">
    <location>
        <begin position="159"/>
        <end position="164"/>
    </location>
    <ligand>
        <name>NAD(+)</name>
        <dbReference type="ChEBI" id="CHEBI:57540"/>
    </ligand>
</feature>
<feature type="binding site" evidence="1">
    <location>
        <position position="183"/>
    </location>
    <ligand>
        <name>NAD(+)</name>
        <dbReference type="ChEBI" id="CHEBI:57540"/>
    </ligand>
</feature>
<evidence type="ECO:0000255" key="1">
    <source>
        <dbReference type="HAMAP-Rule" id="MF_00361"/>
    </source>
</evidence>
<reference key="1">
    <citation type="journal article" date="2000" name="Nature">
        <title>The genome sequence of the plant pathogen Xylella fastidiosa.</title>
        <authorList>
            <person name="Simpson A.J.G."/>
            <person name="Reinach F.C."/>
            <person name="Arruda P."/>
            <person name="Abreu F.A."/>
            <person name="Acencio M."/>
            <person name="Alvarenga R."/>
            <person name="Alves L.M.C."/>
            <person name="Araya J.E."/>
            <person name="Baia G.S."/>
            <person name="Baptista C.S."/>
            <person name="Barros M.H."/>
            <person name="Bonaccorsi E.D."/>
            <person name="Bordin S."/>
            <person name="Bove J.M."/>
            <person name="Briones M.R.S."/>
            <person name="Bueno M.R.P."/>
            <person name="Camargo A.A."/>
            <person name="Camargo L.E.A."/>
            <person name="Carraro D.M."/>
            <person name="Carrer H."/>
            <person name="Colauto N.B."/>
            <person name="Colombo C."/>
            <person name="Costa F.F."/>
            <person name="Costa M.C.R."/>
            <person name="Costa-Neto C.M."/>
            <person name="Coutinho L.L."/>
            <person name="Cristofani M."/>
            <person name="Dias-Neto E."/>
            <person name="Docena C."/>
            <person name="El-Dorry H."/>
            <person name="Facincani A.P."/>
            <person name="Ferreira A.J.S."/>
            <person name="Ferreira V.C.A."/>
            <person name="Ferro J.A."/>
            <person name="Fraga J.S."/>
            <person name="Franca S.C."/>
            <person name="Franco M.C."/>
            <person name="Frohme M."/>
            <person name="Furlan L.R."/>
            <person name="Garnier M."/>
            <person name="Goldman G.H."/>
            <person name="Goldman M.H.S."/>
            <person name="Gomes S.L."/>
            <person name="Gruber A."/>
            <person name="Ho P.L."/>
            <person name="Hoheisel J.D."/>
            <person name="Junqueira M.L."/>
            <person name="Kemper E.L."/>
            <person name="Kitajima J.P."/>
            <person name="Krieger J.E."/>
            <person name="Kuramae E.E."/>
            <person name="Laigret F."/>
            <person name="Lambais M.R."/>
            <person name="Leite L.C.C."/>
            <person name="Lemos E.G.M."/>
            <person name="Lemos M.V.F."/>
            <person name="Lopes S.A."/>
            <person name="Lopes C.R."/>
            <person name="Machado J.A."/>
            <person name="Machado M.A."/>
            <person name="Madeira A.M.B.N."/>
            <person name="Madeira H.M.F."/>
            <person name="Marino C.L."/>
            <person name="Marques M.V."/>
            <person name="Martins E.A.L."/>
            <person name="Martins E.M.F."/>
            <person name="Matsukuma A.Y."/>
            <person name="Menck C.F.M."/>
            <person name="Miracca E.C."/>
            <person name="Miyaki C.Y."/>
            <person name="Monteiro-Vitorello C.B."/>
            <person name="Moon D.H."/>
            <person name="Nagai M.A."/>
            <person name="Nascimento A.L.T.O."/>
            <person name="Netto L.E.S."/>
            <person name="Nhani A. Jr."/>
            <person name="Nobrega F.G."/>
            <person name="Nunes L.R."/>
            <person name="Oliveira M.A."/>
            <person name="de Oliveira M.C."/>
            <person name="de Oliveira R.C."/>
            <person name="Palmieri D.A."/>
            <person name="Paris A."/>
            <person name="Peixoto B.R."/>
            <person name="Pereira G.A.G."/>
            <person name="Pereira H.A. Jr."/>
            <person name="Pesquero J.B."/>
            <person name="Quaggio R.B."/>
            <person name="Roberto P.G."/>
            <person name="Rodrigues V."/>
            <person name="de Rosa A.J.M."/>
            <person name="de Rosa V.E. Jr."/>
            <person name="de Sa R.G."/>
            <person name="Santelli R.V."/>
            <person name="Sawasaki H.E."/>
            <person name="da Silva A.C.R."/>
            <person name="da Silva A.M."/>
            <person name="da Silva F.R."/>
            <person name="Silva W.A. Jr."/>
            <person name="da Silveira J.F."/>
            <person name="Silvestri M.L.Z."/>
            <person name="Siqueira W.J."/>
            <person name="de Souza A.A."/>
            <person name="de Souza A.P."/>
            <person name="Terenzi M.F."/>
            <person name="Truffi D."/>
            <person name="Tsai S.M."/>
            <person name="Tsuhako M.H."/>
            <person name="Vallada H."/>
            <person name="Van Sluys M.A."/>
            <person name="Verjovski-Almeida S."/>
            <person name="Vettore A.L."/>
            <person name="Zago M.A."/>
            <person name="Zatz M."/>
            <person name="Meidanis J."/>
            <person name="Setubal J.C."/>
        </authorList>
    </citation>
    <scope>NUCLEOTIDE SEQUENCE [LARGE SCALE GENOMIC DNA]</scope>
    <source>
        <strain>9a5c</strain>
    </source>
</reference>
<name>NADK_XYLFA</name>